<sequence>MAKTLSKSSGGALAPWLGISLIVILFDQLTKIAVLKTFAYGAMHALTPFFNLTLIYNRGAAFGFLATAGGWQRWAFTALGIGATLVICYLLKRHGHQRLFSLSLALILGGALGNVIDRLIYGHVIDFLDFHVGAWHWPAFNLADSAITVGAVLLIYDELRRVRGAR</sequence>
<dbReference type="EC" id="3.4.23.36" evidence="1"/>
<dbReference type="EMBL" id="CP000570">
    <property type="protein sequence ID" value="ABN81493.1"/>
    <property type="molecule type" value="Genomic_DNA"/>
</dbReference>
<dbReference type="RefSeq" id="WP_004186086.1">
    <property type="nucleotide sequence ID" value="NC_009074.1"/>
</dbReference>
<dbReference type="SMR" id="A3N6P6"/>
<dbReference type="GeneID" id="93059418"/>
<dbReference type="KEGG" id="bpd:BURPS668_0966"/>
<dbReference type="HOGENOM" id="CLU_083252_4_0_4"/>
<dbReference type="UniPathway" id="UPA00665"/>
<dbReference type="GO" id="GO:0005886">
    <property type="term" value="C:plasma membrane"/>
    <property type="evidence" value="ECO:0007669"/>
    <property type="project" value="UniProtKB-SubCell"/>
</dbReference>
<dbReference type="GO" id="GO:0004190">
    <property type="term" value="F:aspartic-type endopeptidase activity"/>
    <property type="evidence" value="ECO:0007669"/>
    <property type="project" value="UniProtKB-UniRule"/>
</dbReference>
<dbReference type="GO" id="GO:0006508">
    <property type="term" value="P:proteolysis"/>
    <property type="evidence" value="ECO:0007669"/>
    <property type="project" value="UniProtKB-KW"/>
</dbReference>
<dbReference type="HAMAP" id="MF_00161">
    <property type="entry name" value="LspA"/>
    <property type="match status" value="1"/>
</dbReference>
<dbReference type="InterPro" id="IPR001872">
    <property type="entry name" value="Peptidase_A8"/>
</dbReference>
<dbReference type="NCBIfam" id="TIGR00077">
    <property type="entry name" value="lspA"/>
    <property type="match status" value="1"/>
</dbReference>
<dbReference type="PANTHER" id="PTHR33695">
    <property type="entry name" value="LIPOPROTEIN SIGNAL PEPTIDASE"/>
    <property type="match status" value="1"/>
</dbReference>
<dbReference type="PANTHER" id="PTHR33695:SF1">
    <property type="entry name" value="LIPOPROTEIN SIGNAL PEPTIDASE"/>
    <property type="match status" value="1"/>
</dbReference>
<dbReference type="Pfam" id="PF01252">
    <property type="entry name" value="Peptidase_A8"/>
    <property type="match status" value="1"/>
</dbReference>
<dbReference type="PRINTS" id="PR00781">
    <property type="entry name" value="LIPOSIGPTASE"/>
</dbReference>
<dbReference type="PROSITE" id="PS00855">
    <property type="entry name" value="SPASE_II"/>
    <property type="match status" value="1"/>
</dbReference>
<reference key="1">
    <citation type="journal article" date="2010" name="Genome Biol. Evol.">
        <title>Continuing evolution of Burkholderia mallei through genome reduction and large-scale rearrangements.</title>
        <authorList>
            <person name="Losada L."/>
            <person name="Ronning C.M."/>
            <person name="DeShazer D."/>
            <person name="Woods D."/>
            <person name="Fedorova N."/>
            <person name="Kim H.S."/>
            <person name="Shabalina S.A."/>
            <person name="Pearson T.R."/>
            <person name="Brinkac L."/>
            <person name="Tan P."/>
            <person name="Nandi T."/>
            <person name="Crabtree J."/>
            <person name="Badger J."/>
            <person name="Beckstrom-Sternberg S."/>
            <person name="Saqib M."/>
            <person name="Schutzer S.E."/>
            <person name="Keim P."/>
            <person name="Nierman W.C."/>
        </authorList>
    </citation>
    <scope>NUCLEOTIDE SEQUENCE [LARGE SCALE GENOMIC DNA]</scope>
    <source>
        <strain>668</strain>
    </source>
</reference>
<organism>
    <name type="scientific">Burkholderia pseudomallei (strain 668)</name>
    <dbReference type="NCBI Taxonomy" id="320373"/>
    <lineage>
        <taxon>Bacteria</taxon>
        <taxon>Pseudomonadati</taxon>
        <taxon>Pseudomonadota</taxon>
        <taxon>Betaproteobacteria</taxon>
        <taxon>Burkholderiales</taxon>
        <taxon>Burkholderiaceae</taxon>
        <taxon>Burkholderia</taxon>
        <taxon>pseudomallei group</taxon>
    </lineage>
</organism>
<feature type="chain" id="PRO_1000038791" description="Lipoprotein signal peptidase">
    <location>
        <begin position="1"/>
        <end position="166"/>
    </location>
</feature>
<feature type="transmembrane region" description="Helical" evidence="1">
    <location>
        <begin position="10"/>
        <end position="30"/>
    </location>
</feature>
<feature type="transmembrane region" description="Helical" evidence="1">
    <location>
        <begin position="32"/>
        <end position="52"/>
    </location>
</feature>
<feature type="transmembrane region" description="Helical" evidence="1">
    <location>
        <begin position="71"/>
        <end position="91"/>
    </location>
</feature>
<feature type="transmembrane region" description="Helical" evidence="1">
    <location>
        <begin position="100"/>
        <end position="120"/>
    </location>
</feature>
<feature type="transmembrane region" description="Helical" evidence="1">
    <location>
        <begin position="135"/>
        <end position="155"/>
    </location>
</feature>
<feature type="active site" evidence="1">
    <location>
        <position position="126"/>
    </location>
</feature>
<feature type="active site" evidence="1">
    <location>
        <position position="144"/>
    </location>
</feature>
<evidence type="ECO:0000255" key="1">
    <source>
        <dbReference type="HAMAP-Rule" id="MF_00161"/>
    </source>
</evidence>
<proteinExistence type="inferred from homology"/>
<name>LSPA_BURP6</name>
<comment type="function">
    <text evidence="1">This protein specifically catalyzes the removal of signal peptides from prolipoproteins.</text>
</comment>
<comment type="catalytic activity">
    <reaction evidence="1">
        <text>Release of signal peptides from bacterial membrane prolipoproteins. Hydrolyzes -Xaa-Yaa-Zaa-|-(S,diacylglyceryl)Cys-, in which Xaa is hydrophobic (preferably Leu), and Yaa (Ala or Ser) and Zaa (Gly or Ala) have small, neutral side chains.</text>
        <dbReference type="EC" id="3.4.23.36"/>
    </reaction>
</comment>
<comment type="pathway">
    <text evidence="1">Protein modification; lipoprotein biosynthesis (signal peptide cleavage).</text>
</comment>
<comment type="subcellular location">
    <subcellularLocation>
        <location evidence="1">Cell inner membrane</location>
        <topology evidence="1">Multi-pass membrane protein</topology>
    </subcellularLocation>
</comment>
<comment type="similarity">
    <text evidence="1">Belongs to the peptidase A8 family.</text>
</comment>
<accession>A3N6P6</accession>
<gene>
    <name evidence="1" type="primary">lspA</name>
    <name type="ordered locus">BURPS668_0966</name>
</gene>
<protein>
    <recommendedName>
        <fullName evidence="1">Lipoprotein signal peptidase</fullName>
        <ecNumber evidence="1">3.4.23.36</ecNumber>
    </recommendedName>
    <alternativeName>
        <fullName evidence="1">Prolipoprotein signal peptidase</fullName>
    </alternativeName>
    <alternativeName>
        <fullName evidence="1">Signal peptidase II</fullName>
        <shortName evidence="1">SPase II</shortName>
    </alternativeName>
</protein>
<keyword id="KW-0064">Aspartyl protease</keyword>
<keyword id="KW-0997">Cell inner membrane</keyword>
<keyword id="KW-1003">Cell membrane</keyword>
<keyword id="KW-0378">Hydrolase</keyword>
<keyword id="KW-0472">Membrane</keyword>
<keyword id="KW-0645">Protease</keyword>
<keyword id="KW-0812">Transmembrane</keyword>
<keyword id="KW-1133">Transmembrane helix</keyword>